<protein>
    <recommendedName>
        <fullName>Zinc finger protein interacting with ribonucleoprotein K</fullName>
    </recommendedName>
</protein>
<name>ZIK1_MOUSE</name>
<reference key="1">
    <citation type="journal article" date="1996" name="J. Biol. Chem.">
        <title>Zik1, a transcriptional repressor that interacts with the heterogeneous nuclear ribonucleoprotein particle K protein.</title>
        <authorList>
            <person name="Denisenko O.N."/>
            <person name="O'Neill B."/>
            <person name="Ostrowski J."/>
            <person name="Van Seuningen I."/>
            <person name="Bomsztyk K."/>
        </authorList>
    </citation>
    <scope>NUCLEOTIDE SEQUENCE [MRNA]</scope>
    <scope>TISSUE SPECIFICITY</scope>
    <scope>INTERACTION WITH HNRPK</scope>
    <scope>FUNCTION</scope>
    <source>
        <tissue>B-cell</tissue>
    </source>
</reference>
<reference key="2">
    <citation type="journal article" date="2005" name="Science">
        <title>The transcriptional landscape of the mammalian genome.</title>
        <authorList>
            <person name="Carninci P."/>
            <person name="Kasukawa T."/>
            <person name="Katayama S."/>
            <person name="Gough J."/>
            <person name="Frith M.C."/>
            <person name="Maeda N."/>
            <person name="Oyama R."/>
            <person name="Ravasi T."/>
            <person name="Lenhard B."/>
            <person name="Wells C."/>
            <person name="Kodzius R."/>
            <person name="Shimokawa K."/>
            <person name="Bajic V.B."/>
            <person name="Brenner S.E."/>
            <person name="Batalov S."/>
            <person name="Forrest A.R."/>
            <person name="Zavolan M."/>
            <person name="Davis M.J."/>
            <person name="Wilming L.G."/>
            <person name="Aidinis V."/>
            <person name="Allen J.E."/>
            <person name="Ambesi-Impiombato A."/>
            <person name="Apweiler R."/>
            <person name="Aturaliya R.N."/>
            <person name="Bailey T.L."/>
            <person name="Bansal M."/>
            <person name="Baxter L."/>
            <person name="Beisel K.W."/>
            <person name="Bersano T."/>
            <person name="Bono H."/>
            <person name="Chalk A.M."/>
            <person name="Chiu K.P."/>
            <person name="Choudhary V."/>
            <person name="Christoffels A."/>
            <person name="Clutterbuck D.R."/>
            <person name="Crowe M.L."/>
            <person name="Dalla E."/>
            <person name="Dalrymple B.P."/>
            <person name="de Bono B."/>
            <person name="Della Gatta G."/>
            <person name="di Bernardo D."/>
            <person name="Down T."/>
            <person name="Engstrom P."/>
            <person name="Fagiolini M."/>
            <person name="Faulkner G."/>
            <person name="Fletcher C.F."/>
            <person name="Fukushima T."/>
            <person name="Furuno M."/>
            <person name="Futaki S."/>
            <person name="Gariboldi M."/>
            <person name="Georgii-Hemming P."/>
            <person name="Gingeras T.R."/>
            <person name="Gojobori T."/>
            <person name="Green R.E."/>
            <person name="Gustincich S."/>
            <person name="Harbers M."/>
            <person name="Hayashi Y."/>
            <person name="Hensch T.K."/>
            <person name="Hirokawa N."/>
            <person name="Hill D."/>
            <person name="Huminiecki L."/>
            <person name="Iacono M."/>
            <person name="Ikeo K."/>
            <person name="Iwama A."/>
            <person name="Ishikawa T."/>
            <person name="Jakt M."/>
            <person name="Kanapin A."/>
            <person name="Katoh M."/>
            <person name="Kawasawa Y."/>
            <person name="Kelso J."/>
            <person name="Kitamura H."/>
            <person name="Kitano H."/>
            <person name="Kollias G."/>
            <person name="Krishnan S.P."/>
            <person name="Kruger A."/>
            <person name="Kummerfeld S.K."/>
            <person name="Kurochkin I.V."/>
            <person name="Lareau L.F."/>
            <person name="Lazarevic D."/>
            <person name="Lipovich L."/>
            <person name="Liu J."/>
            <person name="Liuni S."/>
            <person name="McWilliam S."/>
            <person name="Madan Babu M."/>
            <person name="Madera M."/>
            <person name="Marchionni L."/>
            <person name="Matsuda H."/>
            <person name="Matsuzawa S."/>
            <person name="Miki H."/>
            <person name="Mignone F."/>
            <person name="Miyake S."/>
            <person name="Morris K."/>
            <person name="Mottagui-Tabar S."/>
            <person name="Mulder N."/>
            <person name="Nakano N."/>
            <person name="Nakauchi H."/>
            <person name="Ng P."/>
            <person name="Nilsson R."/>
            <person name="Nishiguchi S."/>
            <person name="Nishikawa S."/>
            <person name="Nori F."/>
            <person name="Ohara O."/>
            <person name="Okazaki Y."/>
            <person name="Orlando V."/>
            <person name="Pang K.C."/>
            <person name="Pavan W.J."/>
            <person name="Pavesi G."/>
            <person name="Pesole G."/>
            <person name="Petrovsky N."/>
            <person name="Piazza S."/>
            <person name="Reed J."/>
            <person name="Reid J.F."/>
            <person name="Ring B.Z."/>
            <person name="Ringwald M."/>
            <person name="Rost B."/>
            <person name="Ruan Y."/>
            <person name="Salzberg S.L."/>
            <person name="Sandelin A."/>
            <person name="Schneider C."/>
            <person name="Schoenbach C."/>
            <person name="Sekiguchi K."/>
            <person name="Semple C.A."/>
            <person name="Seno S."/>
            <person name="Sessa L."/>
            <person name="Sheng Y."/>
            <person name="Shibata Y."/>
            <person name="Shimada H."/>
            <person name="Shimada K."/>
            <person name="Silva D."/>
            <person name="Sinclair B."/>
            <person name="Sperling S."/>
            <person name="Stupka E."/>
            <person name="Sugiura K."/>
            <person name="Sultana R."/>
            <person name="Takenaka Y."/>
            <person name="Taki K."/>
            <person name="Tammoja K."/>
            <person name="Tan S.L."/>
            <person name="Tang S."/>
            <person name="Taylor M.S."/>
            <person name="Tegner J."/>
            <person name="Teichmann S.A."/>
            <person name="Ueda H.R."/>
            <person name="van Nimwegen E."/>
            <person name="Verardo R."/>
            <person name="Wei C.L."/>
            <person name="Yagi K."/>
            <person name="Yamanishi H."/>
            <person name="Zabarovsky E."/>
            <person name="Zhu S."/>
            <person name="Zimmer A."/>
            <person name="Hide W."/>
            <person name="Bult C."/>
            <person name="Grimmond S.M."/>
            <person name="Teasdale R.D."/>
            <person name="Liu E.T."/>
            <person name="Brusic V."/>
            <person name="Quackenbush J."/>
            <person name="Wahlestedt C."/>
            <person name="Mattick J.S."/>
            <person name="Hume D.A."/>
            <person name="Kai C."/>
            <person name="Sasaki D."/>
            <person name="Tomaru Y."/>
            <person name="Fukuda S."/>
            <person name="Kanamori-Katayama M."/>
            <person name="Suzuki M."/>
            <person name="Aoki J."/>
            <person name="Arakawa T."/>
            <person name="Iida J."/>
            <person name="Imamura K."/>
            <person name="Itoh M."/>
            <person name="Kato T."/>
            <person name="Kawaji H."/>
            <person name="Kawagashira N."/>
            <person name="Kawashima T."/>
            <person name="Kojima M."/>
            <person name="Kondo S."/>
            <person name="Konno H."/>
            <person name="Nakano K."/>
            <person name="Ninomiya N."/>
            <person name="Nishio T."/>
            <person name="Okada M."/>
            <person name="Plessy C."/>
            <person name="Shibata K."/>
            <person name="Shiraki T."/>
            <person name="Suzuki S."/>
            <person name="Tagami M."/>
            <person name="Waki K."/>
            <person name="Watahiki A."/>
            <person name="Okamura-Oho Y."/>
            <person name="Suzuki H."/>
            <person name="Kawai J."/>
            <person name="Hayashizaki Y."/>
        </authorList>
    </citation>
    <scope>NUCLEOTIDE SEQUENCE [LARGE SCALE MRNA]</scope>
    <source>
        <tissue>Rathke gland</tissue>
    </source>
</reference>
<reference key="3">
    <citation type="journal article" date="2004" name="Genome Res.">
        <title>The status, quality, and expansion of the NIH full-length cDNA project: the Mammalian Gene Collection (MGC).</title>
        <authorList>
            <consortium name="The MGC Project Team"/>
        </authorList>
    </citation>
    <scope>NUCLEOTIDE SEQUENCE [LARGE SCALE MRNA]</scope>
    <source>
        <strain>C57BL/6J</strain>
        <tissue>Brain</tissue>
    </source>
</reference>
<feature type="chain" id="PRO_0000286794" description="Zinc finger protein interacting with ribonucleoprotein K">
    <location>
        <begin position="1"/>
        <end position="463"/>
    </location>
</feature>
<feature type="domain" description="KRAB" evidence="2">
    <location>
        <begin position="14"/>
        <end position="89"/>
    </location>
</feature>
<feature type="zinc finger region" description="C2H2-type 1" evidence="1">
    <location>
        <begin position="215"/>
        <end position="237"/>
    </location>
</feature>
<feature type="zinc finger region" description="C2H2-type 2" evidence="1">
    <location>
        <begin position="243"/>
        <end position="265"/>
    </location>
</feature>
<feature type="zinc finger region" description="C2H2-type 3" evidence="1">
    <location>
        <begin position="271"/>
        <end position="293"/>
    </location>
</feature>
<feature type="zinc finger region" description="C2H2-type 4" evidence="1">
    <location>
        <begin position="299"/>
        <end position="321"/>
    </location>
</feature>
<feature type="zinc finger region" description="C2H2-type 5" evidence="1">
    <location>
        <begin position="327"/>
        <end position="349"/>
    </location>
</feature>
<feature type="zinc finger region" description="C2H2-type 6" evidence="1">
    <location>
        <begin position="355"/>
        <end position="377"/>
    </location>
</feature>
<feature type="zinc finger region" description="C2H2-type 7" evidence="1">
    <location>
        <begin position="383"/>
        <end position="405"/>
    </location>
</feature>
<feature type="zinc finger region" description="C2H2-type 8" evidence="1">
    <location>
        <begin position="411"/>
        <end position="433"/>
    </location>
</feature>
<feature type="zinc finger region" description="C2H2-type 9" evidence="1">
    <location>
        <begin position="439"/>
        <end position="461"/>
    </location>
</feature>
<feature type="region of interest" description="Disordered" evidence="3">
    <location>
        <begin position="106"/>
        <end position="128"/>
    </location>
</feature>
<feature type="region of interest" description="Disordered" evidence="3">
    <location>
        <begin position="171"/>
        <end position="211"/>
    </location>
</feature>
<feature type="compositionally biased region" description="Basic and acidic residues" evidence="3">
    <location>
        <begin position="174"/>
        <end position="191"/>
    </location>
</feature>
<feature type="compositionally biased region" description="Polar residues" evidence="3">
    <location>
        <begin position="192"/>
        <end position="201"/>
    </location>
</feature>
<feature type="sequence conflict" description="In Ref. 1; AAC52877." evidence="5" ref="1">
    <original>G</original>
    <variation>E</variation>
    <location>
        <position position="211"/>
    </location>
</feature>
<comment type="function">
    <text evidence="4">May be a transcriptional repressor.</text>
</comment>
<comment type="subunit">
    <text evidence="4">Interacts with HNRPK.</text>
</comment>
<comment type="subcellular location">
    <subcellularLocation>
        <location evidence="5">Nucleus</location>
    </subcellularLocation>
</comment>
<comment type="tissue specificity">
    <text evidence="4">Expressed in ovary and liver, and at lower levels in brain and muscle.</text>
</comment>
<comment type="similarity">
    <text evidence="5">Belongs to the krueppel C2H2-type zinc-finger protein family.</text>
</comment>
<gene>
    <name type="primary">Zik1</name>
</gene>
<proteinExistence type="evidence at protein level"/>
<dbReference type="EMBL" id="U69133">
    <property type="protein sequence ID" value="AAC52877.1"/>
    <property type="molecule type" value="mRNA"/>
</dbReference>
<dbReference type="EMBL" id="AK146692">
    <property type="protein sequence ID" value="BAE27363.1"/>
    <property type="molecule type" value="mRNA"/>
</dbReference>
<dbReference type="EMBL" id="AK159077">
    <property type="protein sequence ID" value="BAE34796.1"/>
    <property type="molecule type" value="mRNA"/>
</dbReference>
<dbReference type="EMBL" id="BC050942">
    <property type="protein sequence ID" value="AAH50942.1"/>
    <property type="molecule type" value="mRNA"/>
</dbReference>
<dbReference type="EMBL" id="BC067196">
    <property type="protein sequence ID" value="AAH67196.1"/>
    <property type="molecule type" value="mRNA"/>
</dbReference>
<dbReference type="CCDS" id="CCDS20792.1"/>
<dbReference type="RefSeq" id="NP_033603.2">
    <property type="nucleotide sequence ID" value="NM_009577.3"/>
</dbReference>
<dbReference type="SMR" id="Q80YP6"/>
<dbReference type="FunCoup" id="Q80YP6">
    <property type="interactions" value="1"/>
</dbReference>
<dbReference type="STRING" id="10090.ENSMUSP00000032551"/>
<dbReference type="iPTMnet" id="Q80YP6"/>
<dbReference type="PhosphoSitePlus" id="Q80YP6"/>
<dbReference type="PaxDb" id="10090-ENSMUSP00000032551"/>
<dbReference type="ProteomicsDB" id="299561"/>
<dbReference type="Antibodypedia" id="33273">
    <property type="antibodies" value="98 antibodies from 19 providers"/>
</dbReference>
<dbReference type="DNASU" id="22775"/>
<dbReference type="Ensembl" id="ENSMUST00000032551.8">
    <property type="protein sequence ID" value="ENSMUSP00000032551.8"/>
    <property type="gene ID" value="ENSMUSG00000030393.9"/>
</dbReference>
<dbReference type="GeneID" id="22775"/>
<dbReference type="KEGG" id="mmu:22775"/>
<dbReference type="UCSC" id="uc009fdf.1">
    <property type="organism name" value="mouse"/>
</dbReference>
<dbReference type="AGR" id="MGI:108070"/>
<dbReference type="CTD" id="284307"/>
<dbReference type="MGI" id="MGI:108070">
    <property type="gene designation" value="Zik1"/>
</dbReference>
<dbReference type="VEuPathDB" id="HostDB:ENSMUSG00000030393"/>
<dbReference type="eggNOG" id="KOG1721">
    <property type="taxonomic scope" value="Eukaryota"/>
</dbReference>
<dbReference type="GeneTree" id="ENSGT00940000162907"/>
<dbReference type="HOGENOM" id="CLU_002678_44_3_1"/>
<dbReference type="InParanoid" id="Q80YP6"/>
<dbReference type="OMA" id="WDVEKDL"/>
<dbReference type="OrthoDB" id="8922241at2759"/>
<dbReference type="PhylomeDB" id="Q80YP6"/>
<dbReference type="TreeFam" id="TF339848"/>
<dbReference type="Reactome" id="R-MMU-212436">
    <property type="pathway name" value="Generic Transcription Pathway"/>
</dbReference>
<dbReference type="BioGRID-ORCS" id="22775">
    <property type="hits" value="1 hit in 77 CRISPR screens"/>
</dbReference>
<dbReference type="ChiTaRS" id="Zik1">
    <property type="organism name" value="mouse"/>
</dbReference>
<dbReference type="PRO" id="PR:Q80YP6"/>
<dbReference type="Proteomes" id="UP000000589">
    <property type="component" value="Chromosome 7"/>
</dbReference>
<dbReference type="RNAct" id="Q80YP6">
    <property type="molecule type" value="protein"/>
</dbReference>
<dbReference type="Bgee" id="ENSMUSG00000030393">
    <property type="expression patterns" value="Expressed in otic placode and 225 other cell types or tissues"/>
</dbReference>
<dbReference type="GO" id="GO:0005634">
    <property type="term" value="C:nucleus"/>
    <property type="evidence" value="ECO:0007669"/>
    <property type="project" value="UniProtKB-SubCell"/>
</dbReference>
<dbReference type="GO" id="GO:0003677">
    <property type="term" value="F:DNA binding"/>
    <property type="evidence" value="ECO:0007669"/>
    <property type="project" value="UniProtKB-KW"/>
</dbReference>
<dbReference type="GO" id="GO:0008270">
    <property type="term" value="F:zinc ion binding"/>
    <property type="evidence" value="ECO:0007669"/>
    <property type="project" value="UniProtKB-KW"/>
</dbReference>
<dbReference type="GO" id="GO:0006355">
    <property type="term" value="P:regulation of DNA-templated transcription"/>
    <property type="evidence" value="ECO:0007669"/>
    <property type="project" value="InterPro"/>
</dbReference>
<dbReference type="CDD" id="cd07765">
    <property type="entry name" value="KRAB_A-box"/>
    <property type="match status" value="1"/>
</dbReference>
<dbReference type="FunFam" id="3.30.160.60:FF:000295">
    <property type="entry name" value="zinc finger protein 19"/>
    <property type="match status" value="1"/>
</dbReference>
<dbReference type="FunFam" id="3.30.160.60:FF:002343">
    <property type="entry name" value="Zinc finger protein 33A"/>
    <property type="match status" value="2"/>
</dbReference>
<dbReference type="FunFam" id="3.30.160.60:FF:000382">
    <property type="entry name" value="zinc finger protein 35 isoform X4"/>
    <property type="match status" value="1"/>
</dbReference>
<dbReference type="FunFam" id="3.30.160.60:FF:001498">
    <property type="entry name" value="Zinc finger protein 404"/>
    <property type="match status" value="1"/>
</dbReference>
<dbReference type="FunFam" id="3.30.160.60:FF:000200">
    <property type="entry name" value="zinc finger protein 510 isoform X2"/>
    <property type="match status" value="1"/>
</dbReference>
<dbReference type="FunFam" id="3.30.160.60:FF:001270">
    <property type="entry name" value="zinc finger protein 583 isoform X1"/>
    <property type="match status" value="1"/>
</dbReference>
<dbReference type="FunFam" id="3.30.160.60:FF:001489">
    <property type="entry name" value="Zinc finger protein interacting with ribonucleoprotein K"/>
    <property type="match status" value="2"/>
</dbReference>
<dbReference type="Gene3D" id="6.10.140.140">
    <property type="match status" value="1"/>
</dbReference>
<dbReference type="Gene3D" id="3.30.160.60">
    <property type="entry name" value="Classic Zinc Finger"/>
    <property type="match status" value="9"/>
</dbReference>
<dbReference type="InterPro" id="IPR001909">
    <property type="entry name" value="KRAB"/>
</dbReference>
<dbReference type="InterPro" id="IPR036051">
    <property type="entry name" value="KRAB_dom_sf"/>
</dbReference>
<dbReference type="InterPro" id="IPR036236">
    <property type="entry name" value="Znf_C2H2_sf"/>
</dbReference>
<dbReference type="InterPro" id="IPR013087">
    <property type="entry name" value="Znf_C2H2_type"/>
</dbReference>
<dbReference type="PANTHER" id="PTHR23235:SF178">
    <property type="entry name" value="C2H2-TYPE DOMAIN-CONTAINING PROTEIN-RELATED"/>
    <property type="match status" value="1"/>
</dbReference>
<dbReference type="PANTHER" id="PTHR23235">
    <property type="entry name" value="KRUEPPEL-LIKE TRANSCRIPTION FACTOR"/>
    <property type="match status" value="1"/>
</dbReference>
<dbReference type="Pfam" id="PF01352">
    <property type="entry name" value="KRAB"/>
    <property type="match status" value="1"/>
</dbReference>
<dbReference type="Pfam" id="PF00096">
    <property type="entry name" value="zf-C2H2"/>
    <property type="match status" value="8"/>
</dbReference>
<dbReference type="Pfam" id="PF13912">
    <property type="entry name" value="zf-C2H2_6"/>
    <property type="match status" value="1"/>
</dbReference>
<dbReference type="SMART" id="SM00349">
    <property type="entry name" value="KRAB"/>
    <property type="match status" value="1"/>
</dbReference>
<dbReference type="SMART" id="SM00355">
    <property type="entry name" value="ZnF_C2H2"/>
    <property type="match status" value="9"/>
</dbReference>
<dbReference type="SUPFAM" id="SSF57667">
    <property type="entry name" value="beta-beta-alpha zinc fingers"/>
    <property type="match status" value="5"/>
</dbReference>
<dbReference type="SUPFAM" id="SSF109640">
    <property type="entry name" value="KRAB domain (Kruppel-associated box)"/>
    <property type="match status" value="1"/>
</dbReference>
<dbReference type="PROSITE" id="PS50805">
    <property type="entry name" value="KRAB"/>
    <property type="match status" value="1"/>
</dbReference>
<dbReference type="PROSITE" id="PS00028">
    <property type="entry name" value="ZINC_FINGER_C2H2_1"/>
    <property type="match status" value="9"/>
</dbReference>
<dbReference type="PROSITE" id="PS50157">
    <property type="entry name" value="ZINC_FINGER_C2H2_2"/>
    <property type="match status" value="9"/>
</dbReference>
<accession>Q80YP6</accession>
<accession>P70405</accession>
<keyword id="KW-0238">DNA-binding</keyword>
<keyword id="KW-0479">Metal-binding</keyword>
<keyword id="KW-0539">Nucleus</keyword>
<keyword id="KW-1185">Reference proteome</keyword>
<keyword id="KW-0677">Repeat</keyword>
<keyword id="KW-0678">Repressor</keyword>
<keyword id="KW-0804">Transcription</keyword>
<keyword id="KW-0805">Transcription regulation</keyword>
<keyword id="KW-0862">Zinc</keyword>
<keyword id="KW-0863">Zinc-finger</keyword>
<sequence>MTAEMDMALMQGCVTFQDVAICFSHEEWRLLDETQRLLYLSVMLQNFALINSQGCGHKTEDEERRVSTRASKGLRSETTPKTNLCEKCVPILQDILCLPGLPGQKHSTEASSKVDQHQDHNSTGKPLEKNADRSSYLFYLSAKSFPSWDVEKDLPDILSLLKSQVCPKTKKYRKSTEGRKETSHESDKSEECQSLSSQKQTLAHHPKTSNGKKLYECSKCGKTFRGKYSLDQHQRVHTGERPWECRDCGKFFSQTSHLNDHRRIHTGERPYECSECGKLFRQNSSLVDHQKTHTGARPYECSQCGKSFSQKATLVKHKRVHTGERPYKCSECGNSFSQSAILNQHRRIHTGVKPYECRECGKSFSQKATLIKHQRVHTGERPYKCSECGKSFSQSSILIQHRRIHTGARPYECSQCGKSFSQKSGLIQHQVVHTGERPYECDTCGNSFSQCSSLIHHQKCHNA</sequence>
<organism>
    <name type="scientific">Mus musculus</name>
    <name type="common">Mouse</name>
    <dbReference type="NCBI Taxonomy" id="10090"/>
    <lineage>
        <taxon>Eukaryota</taxon>
        <taxon>Metazoa</taxon>
        <taxon>Chordata</taxon>
        <taxon>Craniata</taxon>
        <taxon>Vertebrata</taxon>
        <taxon>Euteleostomi</taxon>
        <taxon>Mammalia</taxon>
        <taxon>Eutheria</taxon>
        <taxon>Euarchontoglires</taxon>
        <taxon>Glires</taxon>
        <taxon>Rodentia</taxon>
        <taxon>Myomorpha</taxon>
        <taxon>Muroidea</taxon>
        <taxon>Muridae</taxon>
        <taxon>Murinae</taxon>
        <taxon>Mus</taxon>
        <taxon>Mus</taxon>
    </lineage>
</organism>
<evidence type="ECO:0000255" key="1">
    <source>
        <dbReference type="PROSITE-ProRule" id="PRU00042"/>
    </source>
</evidence>
<evidence type="ECO:0000255" key="2">
    <source>
        <dbReference type="PROSITE-ProRule" id="PRU00119"/>
    </source>
</evidence>
<evidence type="ECO:0000256" key="3">
    <source>
        <dbReference type="SAM" id="MobiDB-lite"/>
    </source>
</evidence>
<evidence type="ECO:0000269" key="4">
    <source>
    </source>
</evidence>
<evidence type="ECO:0000305" key="5"/>